<keyword id="KW-0963">Cytoplasm</keyword>
<keyword id="KW-0488">Methylation</keyword>
<keyword id="KW-0648">Protein biosynthesis</keyword>
<name>RF1_RICAE</name>
<protein>
    <recommendedName>
        <fullName evidence="1">Peptide chain release factor 1</fullName>
        <shortName evidence="1">RF-1</shortName>
    </recommendedName>
</protein>
<dbReference type="EMBL" id="CP001612">
    <property type="protein sequence ID" value="ACP53540.1"/>
    <property type="molecule type" value="Genomic_DNA"/>
</dbReference>
<dbReference type="RefSeq" id="WP_012719744.1">
    <property type="nucleotide sequence ID" value="NC_012633.1"/>
</dbReference>
<dbReference type="SMR" id="C3PNN0"/>
<dbReference type="KEGG" id="raf:RAF_ORF0640"/>
<dbReference type="HOGENOM" id="CLU_036856_0_1_5"/>
<dbReference type="Proteomes" id="UP000002305">
    <property type="component" value="Chromosome"/>
</dbReference>
<dbReference type="GO" id="GO:0005737">
    <property type="term" value="C:cytoplasm"/>
    <property type="evidence" value="ECO:0007669"/>
    <property type="project" value="UniProtKB-SubCell"/>
</dbReference>
<dbReference type="GO" id="GO:0016149">
    <property type="term" value="F:translation release factor activity, codon specific"/>
    <property type="evidence" value="ECO:0007669"/>
    <property type="project" value="UniProtKB-UniRule"/>
</dbReference>
<dbReference type="FunFam" id="3.30.160.20:FF:000004">
    <property type="entry name" value="Peptide chain release factor 1"/>
    <property type="match status" value="1"/>
</dbReference>
<dbReference type="FunFam" id="3.30.70.1660:FF:000002">
    <property type="entry name" value="Peptide chain release factor 1"/>
    <property type="match status" value="1"/>
</dbReference>
<dbReference type="FunFam" id="3.30.70.1660:FF:000004">
    <property type="entry name" value="Peptide chain release factor 1"/>
    <property type="match status" value="1"/>
</dbReference>
<dbReference type="Gene3D" id="3.30.160.20">
    <property type="match status" value="1"/>
</dbReference>
<dbReference type="Gene3D" id="3.30.70.1660">
    <property type="match status" value="1"/>
</dbReference>
<dbReference type="Gene3D" id="6.10.140.1950">
    <property type="match status" value="1"/>
</dbReference>
<dbReference type="HAMAP" id="MF_00093">
    <property type="entry name" value="Rel_fac_1"/>
    <property type="match status" value="1"/>
</dbReference>
<dbReference type="InterPro" id="IPR005139">
    <property type="entry name" value="PCRF"/>
</dbReference>
<dbReference type="InterPro" id="IPR000352">
    <property type="entry name" value="Pep_chain_release_fac_I"/>
</dbReference>
<dbReference type="InterPro" id="IPR045853">
    <property type="entry name" value="Pep_chain_release_fac_I_sf"/>
</dbReference>
<dbReference type="InterPro" id="IPR050057">
    <property type="entry name" value="Prokaryotic/Mito_RF"/>
</dbReference>
<dbReference type="InterPro" id="IPR004373">
    <property type="entry name" value="RF-1"/>
</dbReference>
<dbReference type="NCBIfam" id="TIGR00019">
    <property type="entry name" value="prfA"/>
    <property type="match status" value="1"/>
</dbReference>
<dbReference type="NCBIfam" id="NF001859">
    <property type="entry name" value="PRK00591.1"/>
    <property type="match status" value="1"/>
</dbReference>
<dbReference type="PANTHER" id="PTHR43804">
    <property type="entry name" value="LD18447P"/>
    <property type="match status" value="1"/>
</dbReference>
<dbReference type="PANTHER" id="PTHR43804:SF7">
    <property type="entry name" value="LD18447P"/>
    <property type="match status" value="1"/>
</dbReference>
<dbReference type="Pfam" id="PF03462">
    <property type="entry name" value="PCRF"/>
    <property type="match status" value="1"/>
</dbReference>
<dbReference type="Pfam" id="PF00472">
    <property type="entry name" value="RF-1"/>
    <property type="match status" value="1"/>
</dbReference>
<dbReference type="SMART" id="SM00937">
    <property type="entry name" value="PCRF"/>
    <property type="match status" value="1"/>
</dbReference>
<dbReference type="SUPFAM" id="SSF75620">
    <property type="entry name" value="Release factor"/>
    <property type="match status" value="1"/>
</dbReference>
<dbReference type="PROSITE" id="PS00745">
    <property type="entry name" value="RF_PROK_I"/>
    <property type="match status" value="1"/>
</dbReference>
<comment type="function">
    <text evidence="1">Peptide chain release factor 1 directs the termination of translation in response to the peptide chain termination codons UAG and UAA.</text>
</comment>
<comment type="subcellular location">
    <subcellularLocation>
        <location evidence="1">Cytoplasm</location>
    </subcellularLocation>
</comment>
<comment type="PTM">
    <text evidence="1">Methylated by PrmC. Methylation increases the termination efficiency of RF1.</text>
</comment>
<comment type="similarity">
    <text evidence="1">Belongs to the prokaryotic/mitochondrial release factor family.</text>
</comment>
<proteinExistence type="inferred from homology"/>
<reference key="1">
    <citation type="journal article" date="2009" name="BMC Genomics">
        <title>Analysis of the Rickettsia africae genome reveals that virulence acquisition in Rickettsia species may be explained by genome reduction.</title>
        <authorList>
            <person name="Fournier P.-E."/>
            <person name="El Karkouri K."/>
            <person name="Leroy Q."/>
            <person name="Robert C."/>
            <person name="Giumelli B."/>
            <person name="Renesto P."/>
            <person name="Socolovschi C."/>
            <person name="Parola P."/>
            <person name="Audic S."/>
            <person name="Raoult D."/>
        </authorList>
    </citation>
    <scope>NUCLEOTIDE SEQUENCE [LARGE SCALE GENOMIC DNA]</scope>
    <source>
        <strain>ESF-5</strain>
    </source>
</reference>
<organism>
    <name type="scientific">Rickettsia africae (strain ESF-5)</name>
    <dbReference type="NCBI Taxonomy" id="347255"/>
    <lineage>
        <taxon>Bacteria</taxon>
        <taxon>Pseudomonadati</taxon>
        <taxon>Pseudomonadota</taxon>
        <taxon>Alphaproteobacteria</taxon>
        <taxon>Rickettsiales</taxon>
        <taxon>Rickettsiaceae</taxon>
        <taxon>Rickettsieae</taxon>
        <taxon>Rickettsia</taxon>
        <taxon>spotted fever group</taxon>
    </lineage>
</organism>
<accession>C3PNN0</accession>
<sequence length="355" mass="39764">MRFSDNLAKILDKYENLGNKLSSGIMGDEFVKASKEYAELEDVVAKIKEYNKAKSELEEANNFKLEVGLDNATLEMIEDEIYTLENSLPKLERAVKIALLPKDDADSKSAIIEVRAGSGGEEAALFAAVLFNMYQRYAELKGWRFEILAISDTGIGGYKEASASIKGKDVFSKLKFESGVHRVQRVPETESQGRIHTSAATVAVLPEAEEVDIKIEDKDLRIDTYRASGAGGQHVNTTDSAVRITHIPTGITVALQDEKSQHKNKAKALKILRARIYEEERRKKEQERADSRRGQVGSGNRSERIRTYNFPQGRVSDHRINLTLYKIDEVVKNGQLDEFVEALIADDEAKKLLEI</sequence>
<gene>
    <name evidence="1" type="primary">prfA</name>
    <name type="ordered locus">RAF_ORF0640</name>
</gene>
<feature type="chain" id="PRO_1000202701" description="Peptide chain release factor 1">
    <location>
        <begin position="1"/>
        <end position="355"/>
    </location>
</feature>
<feature type="region of interest" description="Disordered" evidence="2">
    <location>
        <begin position="280"/>
        <end position="306"/>
    </location>
</feature>
<feature type="compositionally biased region" description="Basic and acidic residues" evidence="2">
    <location>
        <begin position="280"/>
        <end position="293"/>
    </location>
</feature>
<feature type="modified residue" description="N5-methylglutamine" evidence="1">
    <location>
        <position position="233"/>
    </location>
</feature>
<evidence type="ECO:0000255" key="1">
    <source>
        <dbReference type="HAMAP-Rule" id="MF_00093"/>
    </source>
</evidence>
<evidence type="ECO:0000256" key="2">
    <source>
        <dbReference type="SAM" id="MobiDB-lite"/>
    </source>
</evidence>